<name>Y7A9_ENCCU</name>
<organism>
    <name type="scientific">Encephalitozoon cuniculi (strain GB-M1)</name>
    <name type="common">Microsporidian parasite</name>
    <dbReference type="NCBI Taxonomy" id="284813"/>
    <lineage>
        <taxon>Eukaryota</taxon>
        <taxon>Fungi</taxon>
        <taxon>Fungi incertae sedis</taxon>
        <taxon>Microsporidia</taxon>
        <taxon>Unikaryonidae</taxon>
        <taxon>Encephalitozoon</taxon>
    </lineage>
</organism>
<comment type="developmental stage">
    <text evidence="2">Expressed in late sporogonial stages.</text>
</comment>
<keyword id="KW-0325">Glycoprotein</keyword>
<keyword id="KW-1185">Reference proteome</keyword>
<keyword id="KW-0732">Signal</keyword>
<dbReference type="EMBL" id="AL590447">
    <property type="protein sequence ID" value="CAD25642.1"/>
    <property type="molecule type" value="Genomic_DNA"/>
</dbReference>
<dbReference type="RefSeq" id="NP_586038.1">
    <property type="nucleotide sequence ID" value="NM_001041660.1"/>
</dbReference>
<dbReference type="GeneID" id="859468"/>
<dbReference type="KEGG" id="ecu:ECU07_1090"/>
<dbReference type="VEuPathDB" id="MicrosporidiaDB:ECU07_1090"/>
<dbReference type="HOGENOM" id="CLU_1001252_0_0_1"/>
<dbReference type="InParanoid" id="Q8SUY7"/>
<dbReference type="OMA" id="NICKEGN"/>
<dbReference type="OrthoDB" id="2195775at2759"/>
<dbReference type="Proteomes" id="UP000000819">
    <property type="component" value="Chromosome VII"/>
</dbReference>
<evidence type="ECO:0000255" key="1"/>
<evidence type="ECO:0000269" key="2">
    <source>
    </source>
</evidence>
<accession>Q8SUY7</accession>
<reference key="1">
    <citation type="journal article" date="2001" name="Nature">
        <title>Genome sequence and gene compaction of the eukaryote parasite Encephalitozoon cuniculi.</title>
        <authorList>
            <person name="Katinka M.D."/>
            <person name="Duprat S."/>
            <person name="Cornillot E."/>
            <person name="Metenier G."/>
            <person name="Thomarat F."/>
            <person name="Prensier G."/>
            <person name="Barbe V."/>
            <person name="Peyretaillade E."/>
            <person name="Brottier P."/>
            <person name="Wincker P."/>
            <person name="Delbac F."/>
            <person name="El Alaoui H."/>
            <person name="Peyret P."/>
            <person name="Saurin W."/>
            <person name="Gouy M."/>
            <person name="Weissenbach J."/>
            <person name="Vivares C.P."/>
        </authorList>
    </citation>
    <scope>NUCLEOTIDE SEQUENCE [LARGE SCALE GENOMIC DNA]</scope>
    <source>
        <strain>GB-M1</strain>
    </source>
</reference>
<reference key="2">
    <citation type="journal article" date="2006" name="Proteomics">
        <title>Proteomic analysis of the eukaryotic parasite Encephalitozoon cuniculi (microsporidia): a reference map for proteins expressed in late sporogonial stages.</title>
        <authorList>
            <person name="Brosson D."/>
            <person name="Kuhn L."/>
            <person name="Delbac F."/>
            <person name="Garin J."/>
            <person name="Vivares C.P."/>
            <person name="Texier C."/>
        </authorList>
    </citation>
    <scope>IDENTIFICATION BY MASS SPECTROMETRY [LARGE SCALE ANALYSIS]</scope>
    <scope>DEVELOPMENTAL STAGE</scope>
</reference>
<proteinExistence type="evidence at protein level"/>
<protein>
    <recommendedName>
        <fullName>Uncharacterized protein ECU07_1090</fullName>
    </recommendedName>
</protein>
<gene>
    <name type="ordered locus">ECU07_1090</name>
</gene>
<sequence length="276" mass="31421">MELGLILMFASAFVSAKDRELEEFVEKDIKVFFSSYPAQVLGMEEDQGVLVSHSKYVNPSKYKFVTRARLVKSGERYVVIFGENNICKEGNSVVKCKEERPWDIDRKEFGYTISTDNKCITKGPDESIEMKPCVNTDDQIFGFKLADLGGCGSVESLLGSEKPKSTTTNVNIFQPESECLPSVMIKADGDVEKIEENDVHVLHKEGAHTHVIEEAGHPLYEESAPSKRRVVVSHRTKRSHLPGTRRTYLGHHHFPHHHLPHHYRNRTLFERKPVVF</sequence>
<feature type="signal peptide" evidence="1">
    <location>
        <begin position="1"/>
        <end position="16"/>
    </location>
</feature>
<feature type="chain" id="PRO_0000382777" description="Uncharacterized protein ECU07_1090">
    <location>
        <begin position="17"/>
        <end position="276"/>
    </location>
</feature>
<feature type="glycosylation site" description="N-linked (GlcNAc...) asparagine" evidence="1">
    <location>
        <position position="265"/>
    </location>
</feature>